<dbReference type="EC" id="6.1.1.21" evidence="1"/>
<dbReference type="EMBL" id="CP000921">
    <property type="protein sequence ID" value="ACO22316.1"/>
    <property type="molecule type" value="Genomic_DNA"/>
</dbReference>
<dbReference type="RefSeq" id="WP_000775888.1">
    <property type="nucleotide sequence ID" value="NC_012469.1"/>
</dbReference>
<dbReference type="SMR" id="C1CU26"/>
<dbReference type="KEGG" id="snt:SPT_2132"/>
<dbReference type="HOGENOM" id="CLU_025113_1_1_9"/>
<dbReference type="GO" id="GO:0005737">
    <property type="term" value="C:cytoplasm"/>
    <property type="evidence" value="ECO:0007669"/>
    <property type="project" value="UniProtKB-SubCell"/>
</dbReference>
<dbReference type="GO" id="GO:0005524">
    <property type="term" value="F:ATP binding"/>
    <property type="evidence" value="ECO:0007669"/>
    <property type="project" value="UniProtKB-UniRule"/>
</dbReference>
<dbReference type="GO" id="GO:0140096">
    <property type="term" value="F:catalytic activity, acting on a protein"/>
    <property type="evidence" value="ECO:0007669"/>
    <property type="project" value="UniProtKB-ARBA"/>
</dbReference>
<dbReference type="GO" id="GO:0004821">
    <property type="term" value="F:histidine-tRNA ligase activity"/>
    <property type="evidence" value="ECO:0007669"/>
    <property type="project" value="UniProtKB-UniRule"/>
</dbReference>
<dbReference type="GO" id="GO:0016740">
    <property type="term" value="F:transferase activity"/>
    <property type="evidence" value="ECO:0007669"/>
    <property type="project" value="UniProtKB-ARBA"/>
</dbReference>
<dbReference type="GO" id="GO:0006427">
    <property type="term" value="P:histidyl-tRNA aminoacylation"/>
    <property type="evidence" value="ECO:0007669"/>
    <property type="project" value="UniProtKB-UniRule"/>
</dbReference>
<dbReference type="CDD" id="cd00773">
    <property type="entry name" value="HisRS-like_core"/>
    <property type="match status" value="1"/>
</dbReference>
<dbReference type="CDD" id="cd00859">
    <property type="entry name" value="HisRS_anticodon"/>
    <property type="match status" value="1"/>
</dbReference>
<dbReference type="FunFam" id="3.30.930.10:FF:000005">
    <property type="entry name" value="Histidine--tRNA ligase"/>
    <property type="match status" value="1"/>
</dbReference>
<dbReference type="FunFam" id="3.40.50.800:FF:000022">
    <property type="entry name" value="Histidine--tRNA ligase"/>
    <property type="match status" value="1"/>
</dbReference>
<dbReference type="Gene3D" id="3.40.50.800">
    <property type="entry name" value="Anticodon-binding domain"/>
    <property type="match status" value="1"/>
</dbReference>
<dbReference type="Gene3D" id="3.30.930.10">
    <property type="entry name" value="Bira Bifunctional Protein, Domain 2"/>
    <property type="match status" value="1"/>
</dbReference>
<dbReference type="HAMAP" id="MF_00127">
    <property type="entry name" value="His_tRNA_synth"/>
    <property type="match status" value="1"/>
</dbReference>
<dbReference type="InterPro" id="IPR006195">
    <property type="entry name" value="aa-tRNA-synth_II"/>
</dbReference>
<dbReference type="InterPro" id="IPR045864">
    <property type="entry name" value="aa-tRNA-synth_II/BPL/LPL"/>
</dbReference>
<dbReference type="InterPro" id="IPR004154">
    <property type="entry name" value="Anticodon-bd"/>
</dbReference>
<dbReference type="InterPro" id="IPR036621">
    <property type="entry name" value="Anticodon-bd_dom_sf"/>
</dbReference>
<dbReference type="InterPro" id="IPR015807">
    <property type="entry name" value="His-tRNA-ligase"/>
</dbReference>
<dbReference type="InterPro" id="IPR041715">
    <property type="entry name" value="HisRS-like_core"/>
</dbReference>
<dbReference type="InterPro" id="IPR004516">
    <property type="entry name" value="HisRS/HisZ"/>
</dbReference>
<dbReference type="InterPro" id="IPR033656">
    <property type="entry name" value="HisRS_anticodon"/>
</dbReference>
<dbReference type="NCBIfam" id="TIGR00442">
    <property type="entry name" value="hisS"/>
    <property type="match status" value="1"/>
</dbReference>
<dbReference type="PANTHER" id="PTHR43707:SF1">
    <property type="entry name" value="HISTIDINE--TRNA LIGASE, MITOCHONDRIAL-RELATED"/>
    <property type="match status" value="1"/>
</dbReference>
<dbReference type="PANTHER" id="PTHR43707">
    <property type="entry name" value="HISTIDYL-TRNA SYNTHETASE"/>
    <property type="match status" value="1"/>
</dbReference>
<dbReference type="Pfam" id="PF03129">
    <property type="entry name" value="HGTP_anticodon"/>
    <property type="match status" value="1"/>
</dbReference>
<dbReference type="Pfam" id="PF13393">
    <property type="entry name" value="tRNA-synt_His"/>
    <property type="match status" value="1"/>
</dbReference>
<dbReference type="PIRSF" id="PIRSF001549">
    <property type="entry name" value="His-tRNA_synth"/>
    <property type="match status" value="1"/>
</dbReference>
<dbReference type="SUPFAM" id="SSF52954">
    <property type="entry name" value="Class II aaRS ABD-related"/>
    <property type="match status" value="1"/>
</dbReference>
<dbReference type="SUPFAM" id="SSF55681">
    <property type="entry name" value="Class II aaRS and biotin synthetases"/>
    <property type="match status" value="1"/>
</dbReference>
<dbReference type="PROSITE" id="PS50862">
    <property type="entry name" value="AA_TRNA_LIGASE_II"/>
    <property type="match status" value="1"/>
</dbReference>
<feature type="chain" id="PRO_1000199158" description="Histidine--tRNA ligase">
    <location>
        <begin position="1"/>
        <end position="429"/>
    </location>
</feature>
<organism>
    <name type="scientific">Streptococcus pneumoniae (strain Taiwan19F-14)</name>
    <dbReference type="NCBI Taxonomy" id="487213"/>
    <lineage>
        <taxon>Bacteria</taxon>
        <taxon>Bacillati</taxon>
        <taxon>Bacillota</taxon>
        <taxon>Bacilli</taxon>
        <taxon>Lactobacillales</taxon>
        <taxon>Streptococcaceae</taxon>
        <taxon>Streptococcus</taxon>
    </lineage>
</organism>
<sequence>MKLQKPKGTQDILPAESAKWQYVEGFAREIFKRYNYAEVRTPIFEHYEVISRSVGDTTDIVTKEMYDFYDKGDRHITLRPEGTAPVVRSYVENKLFAPEVQKPSKFYYMGPMFRYERPQAGRLRQFHQIGVECFGSSNPATDVETIVMAAHFLKEIGIQGVKLHLNTLGNPESRAAYRQALIDYLTPLKETLSKDSQRRLEENPLRVLDSKEKEDKVAVENAPSILDFLDEESQTHFDAVRQMLENLGVDYIIDTNMVRGLDYYNHTIFEFITEIEGNDLTVCAGGRYDGLVAYFGGPETAGFGFGLGVERLLLILEKQGVALPIENALDVYIAVLGDGANVKALELVQALRQQGFKAERDYLNRKLKAQFKSADVFAAKTLITLGESEVESGQVTVKNNQTREEVQVSLETISQNFSEIFEKLGFYTQ</sequence>
<keyword id="KW-0030">Aminoacyl-tRNA synthetase</keyword>
<keyword id="KW-0067">ATP-binding</keyword>
<keyword id="KW-0963">Cytoplasm</keyword>
<keyword id="KW-0436">Ligase</keyword>
<keyword id="KW-0547">Nucleotide-binding</keyword>
<keyword id="KW-0648">Protein biosynthesis</keyword>
<accession>C1CU26</accession>
<gene>
    <name evidence="1" type="primary">hisS</name>
    <name type="ordered locus">SPT_2132</name>
</gene>
<proteinExistence type="inferred from homology"/>
<name>SYH_STRZT</name>
<protein>
    <recommendedName>
        <fullName evidence="1">Histidine--tRNA ligase</fullName>
        <ecNumber evidence="1">6.1.1.21</ecNumber>
    </recommendedName>
    <alternativeName>
        <fullName evidence="1">Histidyl-tRNA synthetase</fullName>
        <shortName evidence="1">HisRS</shortName>
    </alternativeName>
</protein>
<comment type="catalytic activity">
    <reaction evidence="1">
        <text>tRNA(His) + L-histidine + ATP = L-histidyl-tRNA(His) + AMP + diphosphate + H(+)</text>
        <dbReference type="Rhea" id="RHEA:17313"/>
        <dbReference type="Rhea" id="RHEA-COMP:9665"/>
        <dbReference type="Rhea" id="RHEA-COMP:9689"/>
        <dbReference type="ChEBI" id="CHEBI:15378"/>
        <dbReference type="ChEBI" id="CHEBI:30616"/>
        <dbReference type="ChEBI" id="CHEBI:33019"/>
        <dbReference type="ChEBI" id="CHEBI:57595"/>
        <dbReference type="ChEBI" id="CHEBI:78442"/>
        <dbReference type="ChEBI" id="CHEBI:78527"/>
        <dbReference type="ChEBI" id="CHEBI:456215"/>
        <dbReference type="EC" id="6.1.1.21"/>
    </reaction>
</comment>
<comment type="subunit">
    <text evidence="1">Homodimer.</text>
</comment>
<comment type="subcellular location">
    <subcellularLocation>
        <location evidence="1">Cytoplasm</location>
    </subcellularLocation>
</comment>
<comment type="similarity">
    <text evidence="1">Belongs to the class-II aminoacyl-tRNA synthetase family.</text>
</comment>
<reference key="1">
    <citation type="journal article" date="2010" name="Genome Biol.">
        <title>Structure and dynamics of the pan-genome of Streptococcus pneumoniae and closely related species.</title>
        <authorList>
            <person name="Donati C."/>
            <person name="Hiller N.L."/>
            <person name="Tettelin H."/>
            <person name="Muzzi A."/>
            <person name="Croucher N.J."/>
            <person name="Angiuoli S.V."/>
            <person name="Oggioni M."/>
            <person name="Dunning Hotopp J.C."/>
            <person name="Hu F.Z."/>
            <person name="Riley D.R."/>
            <person name="Covacci A."/>
            <person name="Mitchell T.J."/>
            <person name="Bentley S.D."/>
            <person name="Kilian M."/>
            <person name="Ehrlich G.D."/>
            <person name="Rappuoli R."/>
            <person name="Moxon E.R."/>
            <person name="Masignani V."/>
        </authorList>
    </citation>
    <scope>NUCLEOTIDE SEQUENCE [LARGE SCALE GENOMIC DNA]</scope>
    <source>
        <strain>Taiwan19F-14</strain>
    </source>
</reference>
<evidence type="ECO:0000255" key="1">
    <source>
        <dbReference type="HAMAP-Rule" id="MF_00127"/>
    </source>
</evidence>